<organism>
    <name type="scientific">Brucella melitensis biotype 2 (strain ATCC 23457)</name>
    <dbReference type="NCBI Taxonomy" id="546272"/>
    <lineage>
        <taxon>Bacteria</taxon>
        <taxon>Pseudomonadati</taxon>
        <taxon>Pseudomonadota</taxon>
        <taxon>Alphaproteobacteria</taxon>
        <taxon>Hyphomicrobiales</taxon>
        <taxon>Brucellaceae</taxon>
        <taxon>Brucella/Ochrobactrum group</taxon>
        <taxon>Brucella</taxon>
    </lineage>
</organism>
<accession>C0RMI7</accession>
<feature type="chain" id="PRO_1000146622" description="Methylglyoxal synthase">
    <location>
        <begin position="1"/>
        <end position="125"/>
    </location>
</feature>
<feature type="domain" description="MGS-like" evidence="1">
    <location>
        <begin position="1"/>
        <end position="125"/>
    </location>
</feature>
<feature type="active site" description="Proton donor/acceptor" evidence="1">
    <location>
        <position position="65"/>
    </location>
</feature>
<feature type="binding site" evidence="1">
    <location>
        <position position="12"/>
    </location>
    <ligand>
        <name>substrate</name>
    </ligand>
</feature>
<feature type="binding site" evidence="1">
    <location>
        <position position="16"/>
    </location>
    <ligand>
        <name>substrate</name>
    </ligand>
</feature>
<feature type="binding site" evidence="1">
    <location>
        <begin position="38"/>
        <end position="41"/>
    </location>
    <ligand>
        <name>substrate</name>
    </ligand>
</feature>
<feature type="binding site" evidence="1">
    <location>
        <begin position="59"/>
        <end position="60"/>
    </location>
    <ligand>
        <name>substrate</name>
    </ligand>
</feature>
<feature type="binding site" evidence="1">
    <location>
        <position position="92"/>
    </location>
    <ligand>
        <name>substrate</name>
    </ligand>
</feature>
<reference key="1">
    <citation type="submission" date="2009-03" db="EMBL/GenBank/DDBJ databases">
        <title>Brucella melitensis ATCC 23457 whole genome shotgun sequencing project.</title>
        <authorList>
            <person name="Setubal J.C."/>
            <person name="Boyle S."/>
            <person name="Crasta O.R."/>
            <person name="Gillespie J.J."/>
            <person name="Kenyon R.W."/>
            <person name="Lu J."/>
            <person name="Mane S."/>
            <person name="Nagrani S."/>
            <person name="Shallom J.M."/>
            <person name="Shallom S."/>
            <person name="Shukla M."/>
            <person name="Snyder E.E."/>
            <person name="Sobral B.W."/>
            <person name="Wattam A.R."/>
            <person name="Will R."/>
            <person name="Williams K."/>
            <person name="Yoo H."/>
            <person name="Munk C."/>
            <person name="Tapia R."/>
            <person name="Han C."/>
            <person name="Detter J.C."/>
            <person name="Bruce D."/>
            <person name="Brettin T.S."/>
        </authorList>
    </citation>
    <scope>NUCLEOTIDE SEQUENCE [LARGE SCALE GENOMIC DNA]</scope>
    <source>
        <strain>ATCC 23457</strain>
    </source>
</reference>
<proteinExistence type="inferred from homology"/>
<name>MGSA_BRUMB</name>
<protein>
    <recommendedName>
        <fullName evidence="1">Methylglyoxal synthase</fullName>
        <shortName evidence="1">MGS</shortName>
        <ecNumber evidence="1">4.2.3.3</ecNumber>
    </recommendedName>
</protein>
<sequence>MTQRLRIALIAHDQKKDDMVAFARAHEQALSRYDIVATGTTGGLIQDACPSLNIHRVKSGPLGGDQQIGAMIAEGTVEVLIFFIDPLSPLPHDVDVKALTRLGSVYDIPMALNRATAEKLVRALD</sequence>
<keyword id="KW-0456">Lyase</keyword>
<gene>
    <name evidence="1" type="primary">mgsA</name>
    <name type="ordered locus">BMEA_B1033</name>
</gene>
<comment type="function">
    <text evidence="1">Catalyzes the formation of methylglyoxal from dihydroxyacetone phosphate.</text>
</comment>
<comment type="catalytic activity">
    <reaction evidence="1">
        <text>dihydroxyacetone phosphate = methylglyoxal + phosphate</text>
        <dbReference type="Rhea" id="RHEA:17937"/>
        <dbReference type="ChEBI" id="CHEBI:17158"/>
        <dbReference type="ChEBI" id="CHEBI:43474"/>
        <dbReference type="ChEBI" id="CHEBI:57642"/>
        <dbReference type="EC" id="4.2.3.3"/>
    </reaction>
</comment>
<comment type="similarity">
    <text evidence="1">Belongs to the methylglyoxal synthase family.</text>
</comment>
<dbReference type="EC" id="4.2.3.3" evidence="1"/>
<dbReference type="EMBL" id="CP001489">
    <property type="protein sequence ID" value="ACO02820.1"/>
    <property type="molecule type" value="Genomic_DNA"/>
</dbReference>
<dbReference type="RefSeq" id="WP_002965604.1">
    <property type="nucleotide sequence ID" value="NC_012442.1"/>
</dbReference>
<dbReference type="SMR" id="C0RMI7"/>
<dbReference type="KEGG" id="bmi:BMEA_B1033"/>
<dbReference type="HOGENOM" id="CLU_120420_1_0_5"/>
<dbReference type="Proteomes" id="UP000001748">
    <property type="component" value="Chromosome II"/>
</dbReference>
<dbReference type="GO" id="GO:0005829">
    <property type="term" value="C:cytosol"/>
    <property type="evidence" value="ECO:0007669"/>
    <property type="project" value="TreeGrafter"/>
</dbReference>
<dbReference type="GO" id="GO:0008929">
    <property type="term" value="F:methylglyoxal synthase activity"/>
    <property type="evidence" value="ECO:0007669"/>
    <property type="project" value="UniProtKB-UniRule"/>
</dbReference>
<dbReference type="GO" id="GO:0019242">
    <property type="term" value="P:methylglyoxal biosynthetic process"/>
    <property type="evidence" value="ECO:0007669"/>
    <property type="project" value="UniProtKB-UniRule"/>
</dbReference>
<dbReference type="CDD" id="cd01422">
    <property type="entry name" value="MGS"/>
    <property type="match status" value="1"/>
</dbReference>
<dbReference type="Gene3D" id="3.40.50.1380">
    <property type="entry name" value="Methylglyoxal synthase-like domain"/>
    <property type="match status" value="1"/>
</dbReference>
<dbReference type="HAMAP" id="MF_00549">
    <property type="entry name" value="Methylglyoxal_synth"/>
    <property type="match status" value="1"/>
</dbReference>
<dbReference type="InterPro" id="IPR004363">
    <property type="entry name" value="Methylgl_synth"/>
</dbReference>
<dbReference type="InterPro" id="IPR018148">
    <property type="entry name" value="Methylglyoxal_synth_AS"/>
</dbReference>
<dbReference type="InterPro" id="IPR011607">
    <property type="entry name" value="MGS-like_dom"/>
</dbReference>
<dbReference type="InterPro" id="IPR036914">
    <property type="entry name" value="MGS-like_dom_sf"/>
</dbReference>
<dbReference type="NCBIfam" id="TIGR00160">
    <property type="entry name" value="MGSA"/>
    <property type="match status" value="1"/>
</dbReference>
<dbReference type="NCBIfam" id="NF003559">
    <property type="entry name" value="PRK05234.1"/>
    <property type="match status" value="1"/>
</dbReference>
<dbReference type="PANTHER" id="PTHR30492">
    <property type="entry name" value="METHYLGLYOXAL SYNTHASE"/>
    <property type="match status" value="1"/>
</dbReference>
<dbReference type="PANTHER" id="PTHR30492:SF0">
    <property type="entry name" value="METHYLGLYOXAL SYNTHASE"/>
    <property type="match status" value="1"/>
</dbReference>
<dbReference type="Pfam" id="PF02142">
    <property type="entry name" value="MGS"/>
    <property type="match status" value="1"/>
</dbReference>
<dbReference type="PIRSF" id="PIRSF006614">
    <property type="entry name" value="Methylglyox_syn"/>
    <property type="match status" value="1"/>
</dbReference>
<dbReference type="SMART" id="SM00851">
    <property type="entry name" value="MGS"/>
    <property type="match status" value="1"/>
</dbReference>
<dbReference type="SUPFAM" id="SSF52335">
    <property type="entry name" value="Methylglyoxal synthase-like"/>
    <property type="match status" value="1"/>
</dbReference>
<dbReference type="PROSITE" id="PS01335">
    <property type="entry name" value="METHYLGLYOXAL_SYNTH"/>
    <property type="match status" value="1"/>
</dbReference>
<dbReference type="PROSITE" id="PS51855">
    <property type="entry name" value="MGS"/>
    <property type="match status" value="1"/>
</dbReference>
<evidence type="ECO:0000255" key="1">
    <source>
        <dbReference type="HAMAP-Rule" id="MF_00549"/>
    </source>
</evidence>